<accession>Q17VS8</accession>
<protein>
    <recommendedName>
        <fullName evidence="1">Lipoprotein signal peptidase</fullName>
        <ecNumber evidence="1">3.4.23.36</ecNumber>
    </recommendedName>
    <alternativeName>
        <fullName evidence="1">Prolipoprotein signal peptidase</fullName>
    </alternativeName>
    <alternativeName>
        <fullName evidence="1">Signal peptidase II</fullName>
        <shortName evidence="1">SPase II</shortName>
    </alternativeName>
</protein>
<dbReference type="EC" id="3.4.23.36" evidence="1"/>
<dbReference type="EMBL" id="AM260522">
    <property type="protein sequence ID" value="CAK00248.1"/>
    <property type="molecule type" value="Genomic_DNA"/>
</dbReference>
<dbReference type="RefSeq" id="WP_011578334.1">
    <property type="nucleotide sequence ID" value="NC_008229.1"/>
</dbReference>
<dbReference type="SMR" id="Q17VS8"/>
<dbReference type="STRING" id="382638.Hac_1530"/>
<dbReference type="GeneID" id="31758798"/>
<dbReference type="KEGG" id="hac:Hac_1530"/>
<dbReference type="eggNOG" id="COG0597">
    <property type="taxonomic scope" value="Bacteria"/>
</dbReference>
<dbReference type="HOGENOM" id="CLU_083252_4_3_7"/>
<dbReference type="OrthoDB" id="9810259at2"/>
<dbReference type="BioCyc" id="HACI382638:HAC_RS06485-MONOMER"/>
<dbReference type="UniPathway" id="UPA00665"/>
<dbReference type="Proteomes" id="UP000000775">
    <property type="component" value="Chromosome"/>
</dbReference>
<dbReference type="GO" id="GO:0005886">
    <property type="term" value="C:plasma membrane"/>
    <property type="evidence" value="ECO:0007669"/>
    <property type="project" value="UniProtKB-SubCell"/>
</dbReference>
<dbReference type="GO" id="GO:0004190">
    <property type="term" value="F:aspartic-type endopeptidase activity"/>
    <property type="evidence" value="ECO:0007669"/>
    <property type="project" value="UniProtKB-UniRule"/>
</dbReference>
<dbReference type="GO" id="GO:0006508">
    <property type="term" value="P:proteolysis"/>
    <property type="evidence" value="ECO:0007669"/>
    <property type="project" value="UniProtKB-KW"/>
</dbReference>
<dbReference type="HAMAP" id="MF_00161">
    <property type="entry name" value="LspA"/>
    <property type="match status" value="1"/>
</dbReference>
<dbReference type="InterPro" id="IPR001872">
    <property type="entry name" value="Peptidase_A8"/>
</dbReference>
<dbReference type="NCBIfam" id="TIGR00077">
    <property type="entry name" value="lspA"/>
    <property type="match status" value="1"/>
</dbReference>
<dbReference type="PANTHER" id="PTHR33695">
    <property type="entry name" value="LIPOPROTEIN SIGNAL PEPTIDASE"/>
    <property type="match status" value="1"/>
</dbReference>
<dbReference type="PANTHER" id="PTHR33695:SF1">
    <property type="entry name" value="LIPOPROTEIN SIGNAL PEPTIDASE"/>
    <property type="match status" value="1"/>
</dbReference>
<dbReference type="Pfam" id="PF01252">
    <property type="entry name" value="Peptidase_A8"/>
    <property type="match status" value="1"/>
</dbReference>
<dbReference type="PRINTS" id="PR00781">
    <property type="entry name" value="LIPOSIGPTASE"/>
</dbReference>
<dbReference type="PROSITE" id="PS00855">
    <property type="entry name" value="SPASE_II"/>
    <property type="match status" value="1"/>
</dbReference>
<organism>
    <name type="scientific">Helicobacter acinonychis (strain Sheeba)</name>
    <dbReference type="NCBI Taxonomy" id="382638"/>
    <lineage>
        <taxon>Bacteria</taxon>
        <taxon>Pseudomonadati</taxon>
        <taxon>Campylobacterota</taxon>
        <taxon>Epsilonproteobacteria</taxon>
        <taxon>Campylobacterales</taxon>
        <taxon>Helicobacteraceae</taxon>
        <taxon>Helicobacter</taxon>
    </lineage>
</organism>
<gene>
    <name evidence="1" type="primary">lspA</name>
    <name type="ordered locus">Hac_1530</name>
</gene>
<evidence type="ECO:0000255" key="1">
    <source>
        <dbReference type="HAMAP-Rule" id="MF_00161"/>
    </source>
</evidence>
<comment type="function">
    <text evidence="1">This protein specifically catalyzes the removal of signal peptides from prolipoproteins.</text>
</comment>
<comment type="catalytic activity">
    <reaction evidence="1">
        <text>Release of signal peptides from bacterial membrane prolipoproteins. Hydrolyzes -Xaa-Yaa-Zaa-|-(S,diacylglyceryl)Cys-, in which Xaa is hydrophobic (preferably Leu), and Yaa (Ala or Ser) and Zaa (Gly or Ala) have small, neutral side chains.</text>
        <dbReference type="EC" id="3.4.23.36"/>
    </reaction>
</comment>
<comment type="pathway">
    <text evidence="1">Protein modification; lipoprotein biosynthesis (signal peptide cleavage).</text>
</comment>
<comment type="subcellular location">
    <subcellularLocation>
        <location evidence="1">Cell inner membrane</location>
        <topology evidence="1">Multi-pass membrane protein</topology>
    </subcellularLocation>
</comment>
<comment type="similarity">
    <text evidence="1">Belongs to the peptidase A8 family.</text>
</comment>
<proteinExistence type="inferred from homology"/>
<keyword id="KW-0064">Aspartyl protease</keyword>
<keyword id="KW-0997">Cell inner membrane</keyword>
<keyword id="KW-1003">Cell membrane</keyword>
<keyword id="KW-0378">Hydrolase</keyword>
<keyword id="KW-0472">Membrane</keyword>
<keyword id="KW-0645">Protease</keyword>
<keyword id="KW-0812">Transmembrane</keyword>
<keyword id="KW-1133">Transmembrane helix</keyword>
<sequence length="157" mass="17940">MLKTTQTSLFIFIGVFLLIFGTDQAIKYAILEGFRYESSIIDIVLVFNKGVAFSLLSFLEGSLKYLQILLILGLFIFLMRQIELFKAHTIEFGMVFGAGVSNILDRFVHGGVVDYVYYHYGFDFAIFNFADVMIDVGVGVLLIRQFFFKQKQNKIKA</sequence>
<feature type="chain" id="PRO_0000289390" description="Lipoprotein signal peptidase">
    <location>
        <begin position="1"/>
        <end position="157"/>
    </location>
</feature>
<feature type="transmembrane region" description="Helical" evidence="1">
    <location>
        <begin position="10"/>
        <end position="30"/>
    </location>
</feature>
<feature type="transmembrane region" description="Helical" evidence="1">
    <location>
        <begin position="36"/>
        <end position="56"/>
    </location>
</feature>
<feature type="transmembrane region" description="Helical" evidence="1">
    <location>
        <begin position="58"/>
        <end position="78"/>
    </location>
</feature>
<feature type="transmembrane region" description="Helical" evidence="1">
    <location>
        <begin position="84"/>
        <end position="104"/>
    </location>
</feature>
<feature type="transmembrane region" description="Helical" evidence="1">
    <location>
        <begin position="123"/>
        <end position="143"/>
    </location>
</feature>
<feature type="active site" evidence="1">
    <location>
        <position position="114"/>
    </location>
</feature>
<feature type="active site" evidence="1">
    <location>
        <position position="131"/>
    </location>
</feature>
<reference key="1">
    <citation type="journal article" date="2006" name="PLoS Genet.">
        <title>Who ate whom? Adaptive Helicobacter genomic changes that accompanied a host jump from early humans to large felines.</title>
        <authorList>
            <person name="Eppinger M."/>
            <person name="Baar C."/>
            <person name="Linz B."/>
            <person name="Raddatz G."/>
            <person name="Lanz C."/>
            <person name="Keller H."/>
            <person name="Morelli G."/>
            <person name="Gressmann H."/>
            <person name="Achtman M."/>
            <person name="Schuster S.C."/>
        </authorList>
    </citation>
    <scope>NUCLEOTIDE SEQUENCE [LARGE SCALE GENOMIC DNA]</scope>
    <source>
        <strain>Sheeba</strain>
    </source>
</reference>
<name>LSPA_HELAH</name>